<sequence>MSDSKKHYNESNVRYKVKYSGKIFGNNMKKLNENNNHDFTTAEAAWMEKKKKLYKDTNNQPLWDFRKIQINPTETDELISFPSNKICSKNYGKYSFIFKGLYEQFLRLPNIWFLLISLLEFIPQYQNLSNYMYYSKHSSFFLLLFFICVSIIKNIYEDSRRSNIDYQINNRLCHMLDGPNSQLKAVRWMELSVGSIIRLIENEQVPADILLLSCNNSEGVVYIETSLLNGETNLNKKYCVNETRNETSIYAISNIRGRIVCEKPNSNMESFNGSLKLDAHPRATSLSINNVIFKGSHIKNTEYIFGVILYTGNDTKIMKNISNNKHKLGYVNKELNSYTIIGLIFTFICVFISVLFKWTEDDKFRNGSHFFLITVKDNICESIVKYTLLYSNIIPISILISVDLISILQSILIENDNHISTFENYETSEPSTIDDMDNELGDFKMDKSHTFFKKYTYFLNNRSKNFTNNRYSSTNTERASDFRKSFFGTFDKLKTIKRYFYSIKSKIKSISQSNTLYNKSSAGGSIIRSDKNKQTTFSKSFIDIFQRTNNNEHSQTLDNNNNNDNNNNNNICKEKYQNVNNSKNVYVSEDSSNNKYKQNDYLQKSQEQNEIHSINNNNYNNKNDNNLQTEFSNHNFRINAYKTNRTTKDDTYNNKHISLNSRSKSNQKGILINSNEINRKKKKNLLQKIFPFFKKKRTNISEDLSKYVFRRSKQLNINHNNSEKYNLNDYDEYGWGLCLNSNMHGDLGNVDFIFTDKTGTLTNNNMTFNMCSIAGKTYGSKCKNKKKIYNNPKSNNDNKLNSYDKNIFKNKFSSEASIKKISFVRDFSNNVSSKNDLTLDDPTELISDEGNNYLRDKYEHTSDKKNDTNKNRDGANNSNNNNNKDVSNNKNKNNNNYNYNSNNDYIKQNGECNIYNNQNNTNNTHNNNIYYDEYNNTNEGNMKNTNVNKDTNSKCNKKDFIINTSDIINNNNNNNNDQKTNNLKYKSSSSWNSKAKKSSYINLNSYNKYQSFQNSSMLSSSLSSTCSSETEDENGSQLMYYSSSNYDNLDINNDMDSTKTYSHYTEQNYYNSVKDDKDINSEHQRYQQKKTNKQTKNIQQNQCDQWEDNRYTQESIKNQYFFDRNYQTFLMKQNFPRPKSFRLNMNSSSVKGRCDFNDTKIYNDLNSQSWRGYYIDEFFKCMTLCHAVTPFIQFDYIRNKHLTYTNSRSSKGISNNMDRYNINPTTTTTNNNNNNNNINNINNINNNNNNNNNNNNNKQFSCDYMKNRNDIIFETSTDYYANQDNAKRKREKTLFDNVSHCGEIQEYRDNKKYRMKRSQTCSNNRKIFSNQRTLYDYRNMNNNLKNKNSYLRNKLKSKIFLDKSYRKRKKSSGTYKGSDICKGIEKKETRRWKRFLHMKGSNNRNIFSRIKDFKSNSIIYNNQDKTNDYKNGYSNNINNNNSNNYTNEKINRSFNKRHSAVSFKQMSKEKLIPINNVLSNRCDVESYPNEELSFSKKKKKNSEIVSFASGKSDIGFEERTDAGIAGKNMELSYNELEKYKYVKHIDSNNKYINNNNNSIHMSHMSSNNNTFESHIYFDAIKYQSSSLDEECLIYSSSFLGYRLVLRNKNTMCIEIDGSFNKWTIIGVNEFTNRRGKMSIVVKPDSMESGSILYVKGSDSSILSLLNLKYSKFLDKKYSRKRRNKNIQKYKQKREEYNELKSKDINIEEFQKSKSLSLKNFKNNTPKVLFGECTLDNNNNNINKNYKYDKNDKHNNNNNNNNNNSNYSYNYLHDSNNLDAMQNQKYSYAYEDKEDYYYTNNGECNKYKERYRRLEKQLRKFSVKGLRSMIFAFRYLSEEETIKYKRMYDDACSSIYNKEQRLEKVAEEFERDLIYLGITGVKNGLQEKVPKTIDILNQSGIRIWMLTGDNVEYSLHVSFLCKFLNKHTKIFHAALENSNAKKLKREGMALYELFQLEKEEKKPYENLCLLVNGRNLQTFLNYTDLQTHFLNMACTCDVVIACRITAKQKAFLVQLIKNRLYPTPNTLAIGDGANDIAMIQEANIGVSIMTSDCIISAGYSDYCIKKFCYLRKLLFIYGSKHLYTISIILYWNFFKNILLILPIFFYQAYASWSCVKIYPELLYTFFSIFWVFIPIIYYMFLQHNLNYDILYNIPLFYALSRRRYNMNCFKFLPWIFEAIFYSMIIYFFAYAALKENSHLNNGEVITINTFGNICFIGCLLISILRLFLEGSLWSPSILITCFGCFLFVFFPSLLFICFAYLSNEYIREVFRQTFLWAPLYVLLILWFSTCIISYIFINFTKSILFPNIYNVVNHWLFEQYQEKHNKNKYIFSLSGKNKFLKLRKLGKKIKFKFKRNYSKKYDTNVIREHPLLHHTFKSEQDQNKCNEQFSKDPFISNSLLKSKNCKFKKDSSYSKSNIHVDEEQTYKGLKVVLSEQVVHAKENLVSFKNEKKNKNNKNTSMNVNDNIIIKNNNINIKNNDNNNDDNDNDNNNNNNNNDNYNNNDHNKKEFKQKHIQNNYENLFNHTQVENNLIKENLSIRNDNNRRDNKNETDYIKQSDEDYEMNPSITSLRKRECINDSKYIDNKSYDNKISNNHEEKDGFKSDDRSLINSNMMDYKNEFTENDTTYSFNDSHMFYDFPSNSKTTKDYKVINSRIDDSIMADMKNCLNPLKNTFLVDLLPPGKRFRINEDHIYFKNNERMENIPEALDVNKKYYHIIQNKAEYYDNDSLSEFSYTSSNSSINNKKKNENTQKEIVKVSHLINRFTLAFKDMQLESGFQIHKKNKFYKTFTPWYRFIFLLLGVFFLYVWKLESSLSQLWNMPSDASTDVFILFLSLLLELVLLAATVTTFFSNIFIENFNKIISAVVILIITYHVVSYSVTHIDGVFQAVLFPLYTFVILRLPFVNAVLCNIIFLGLFIIRFNGDHFLDKKGLAHYIPLFIGVDVFVGFVGYRLEYNQRKNFLLEYSVESSRRKQREILNTMLPPFVVDEMIYSELNEEGIPISLKAEDISTVTIIFCDIYDFQNIVASIEPTRLVEVLDRLFLCFDKCTEQFNCTKIETVFETYLAACGLVKREKDEDELENNKYSNNNKNNNNNYYYNRKKKKKKNNNNNNNNNNNNNNNNNNNNNLNNNNNNNNVNTSDDDGDFFEEDDANNHQIYNQMKGQEDAHDSIDFALSILHVSSHIKYEKSKMMLKKNDSFEDANDDTHNVNDSFNNDKAENDNTNTDNNKPTRIRVKVGIHSGRIIAGVVGSKKPQYALFGDTVNTASRMKTTGKPDYIHISEATYNLVKDDKTLIYEKKETEIKGKGIMTTYLLTSVIGLNYPFLGEHVEKKGHFISELYEDDLSNNLNYDKTQNILGYYSNKINQNNDSNINEGIINNNMNTFNTIDGDTSNYYVNLKDLSLNDLPNEYIKDVNTHYCEIIKLRNLKIGTAVGYQLKQKDFYNMTFLNNGLNNDTATNFNQYIESHKDFDDIKDLRIGMNKLSISDSLYYLNENVIRNEPINEYKNKIKINSVNTNKKSYEDAHLNAGNIIYTNNEYPNGQNIEEDDDLLLTNHYNKTNVNNNNNNNIYDVSKELIEHNEEDYKNILMCSKRCKNCNETYCTPNDCNNNDHVYHVMYHRKLSNIKKNYLKNIRKDANIKKDIEKEELNKIHSNKKSFNFFYLFSYIFKIFPFIGKINKEEKKNKSYKKGEQDKSSKRIIALNSEWIFLKFSDKNLEAKYRAHFYSNKSNINSIEQALIIFLVTFVMQTLISSTVSIVFIDHKRATQTLHINYFAYWSVRSVYTFFGFVLWLLFHYRTRPEVSSLLNIKWMIFFLNLLFISAACVFSIAYLWAISETDQTTSYTIWMTNDTIEFFFYLVILHHNTGMLFQTCILVDLLFITMSLTFIATSVVKTITTDSTVLLIPWYVAFNLISTYCKESIDRRTFYANESAKKTENRATELLNDMLPKHVLEEFQQDKLKLAYTHDRLTFLFADICGFTSWANGVDASEVLTLLQKLFAKFDNDSTKYGLYKLCTIGDAYVAISEPVTEDNKDYDPVDGTERVLEMAYSMIRIIKEIREKLYIPNLNMRIGLHYGSCVGGVIGSGRLRYDLWGIDVLTGNLMESNGIPGKINVSETLKNFLLQQFKNRFIFKPHTTIRVIYKDVKCFIITDKKEVESSNHSKLLQNKNYLLNKKFSTQNYLVKNIFAKKKHSSISSSKNIHSYDEKKKKKNDLFYINVNDRQSNL</sequence>
<dbReference type="EC" id="4.6.1.2" evidence="11"/>
<dbReference type="EMBL" id="AJ245435">
    <property type="protein sequence ID" value="CAC00546.1"/>
    <property type="molecule type" value="Genomic_DNA"/>
</dbReference>
<dbReference type="EMBL" id="LN999945">
    <property type="protein sequence ID" value="CZT99049.1"/>
    <property type="molecule type" value="Genomic_DNA"/>
</dbReference>
<dbReference type="RefSeq" id="XP_001348065.1">
    <property type="nucleotide sequence ID" value="XM_001348029.1"/>
</dbReference>
<dbReference type="SMR" id="Q8IHY1"/>
<dbReference type="STRING" id="36329.Q8IHY1"/>
<dbReference type="TCDB" id="3.A.3.8.31">
    <property type="family name" value="the p-type atpase (p-atpase) superfamily"/>
</dbReference>
<dbReference type="GlyCosmos" id="Q8IHY1">
    <property type="glycosylation" value="2 sites, No reported glycans"/>
</dbReference>
<dbReference type="PaxDb" id="5833-PF11_0395"/>
<dbReference type="EnsemblProtists" id="CZT99049">
    <property type="protein sequence ID" value="CZT99049"/>
    <property type="gene ID" value="PF3D7_1138400"/>
</dbReference>
<dbReference type="GeneID" id="810941"/>
<dbReference type="KEGG" id="pfa:PF3D7_1138400"/>
<dbReference type="VEuPathDB" id="PlasmoDB:PF3D7_1138400"/>
<dbReference type="VEuPathDB" id="PlasmoDB:Pf7G8_110042200"/>
<dbReference type="VEuPathDB" id="PlasmoDB:PfCD01_110043800"/>
<dbReference type="VEuPathDB" id="PlasmoDB:PfDd2_110041600"/>
<dbReference type="VEuPathDB" id="PlasmoDB:PfGA01_110042600"/>
<dbReference type="VEuPathDB" id="PlasmoDB:PfGB4_110044900"/>
<dbReference type="VEuPathDB" id="PlasmoDB:PfGN01_110042900"/>
<dbReference type="VEuPathDB" id="PlasmoDB:PfHB3_110041800"/>
<dbReference type="VEuPathDB" id="PlasmoDB:PfIT_110042900"/>
<dbReference type="VEuPathDB" id="PlasmoDB:PfKE01_110042900"/>
<dbReference type="VEuPathDB" id="PlasmoDB:PfKH01_110042700"/>
<dbReference type="VEuPathDB" id="PlasmoDB:PfKH02_110043600"/>
<dbReference type="VEuPathDB" id="PlasmoDB:PfML01_110043200"/>
<dbReference type="VEuPathDB" id="PlasmoDB:PfSD01_110041000"/>
<dbReference type="VEuPathDB" id="PlasmoDB:PfSN01_110041500"/>
<dbReference type="VEuPathDB" id="PlasmoDB:PfTG01_110042800"/>
<dbReference type="HOGENOM" id="CLU_224277_0_0_1"/>
<dbReference type="InParanoid" id="Q8IHY1"/>
<dbReference type="OMA" id="CIPNLNM"/>
<dbReference type="OrthoDB" id="354346at2759"/>
<dbReference type="PhylomeDB" id="Q8IHY1"/>
<dbReference type="Reactome" id="R-PFA-6798695">
    <property type="pathway name" value="Neutrophil degranulation"/>
</dbReference>
<dbReference type="Reactome" id="R-PFA-936837">
    <property type="pathway name" value="Ion transport by P-type ATPases"/>
</dbReference>
<dbReference type="Proteomes" id="UP000001450">
    <property type="component" value="Chromosome 11"/>
</dbReference>
<dbReference type="GO" id="GO:0030659">
    <property type="term" value="C:cytoplasmic vesicle membrane"/>
    <property type="evidence" value="ECO:0000314"/>
    <property type="project" value="UniProtKB"/>
</dbReference>
<dbReference type="GO" id="GO:0005886">
    <property type="term" value="C:plasma membrane"/>
    <property type="evidence" value="ECO:0000318"/>
    <property type="project" value="GO_Central"/>
</dbReference>
<dbReference type="GO" id="GO:0140326">
    <property type="term" value="F:ATPase-coupled intramembrane lipid transporter activity"/>
    <property type="evidence" value="ECO:0000318"/>
    <property type="project" value="GO_Central"/>
</dbReference>
<dbReference type="GO" id="GO:0004383">
    <property type="term" value="F:guanylate cyclase activity"/>
    <property type="evidence" value="ECO:0000304"/>
    <property type="project" value="GeneDB"/>
</dbReference>
<dbReference type="GO" id="GO:0046872">
    <property type="term" value="F:metal ion binding"/>
    <property type="evidence" value="ECO:0007669"/>
    <property type="project" value="UniProtKB-KW"/>
</dbReference>
<dbReference type="GO" id="GO:0006182">
    <property type="term" value="P:cGMP biosynthetic process"/>
    <property type="evidence" value="ECO:0000315"/>
    <property type="project" value="UniProtKB"/>
</dbReference>
<dbReference type="GO" id="GO:0035556">
    <property type="term" value="P:intracellular signal transduction"/>
    <property type="evidence" value="ECO:0007669"/>
    <property type="project" value="InterPro"/>
</dbReference>
<dbReference type="GO" id="GO:0045332">
    <property type="term" value="P:phospholipid translocation"/>
    <property type="evidence" value="ECO:0000318"/>
    <property type="project" value="GO_Central"/>
</dbReference>
<dbReference type="GO" id="GO:0007165">
    <property type="term" value="P:signal transduction"/>
    <property type="evidence" value="ECO:0000304"/>
    <property type="project" value="GeneDB"/>
</dbReference>
<dbReference type="CDD" id="cd07302">
    <property type="entry name" value="CHD"/>
    <property type="match status" value="2"/>
</dbReference>
<dbReference type="FunFam" id="3.30.70.1230:FF:000026">
    <property type="entry name" value="Guanylyl cyclase, putative"/>
    <property type="match status" value="1"/>
</dbReference>
<dbReference type="Gene3D" id="2.70.150.10">
    <property type="entry name" value="Calcium-transporting ATPase, cytoplasmic transduction domain A"/>
    <property type="match status" value="1"/>
</dbReference>
<dbReference type="Gene3D" id="3.40.50.1000">
    <property type="entry name" value="HAD superfamily/HAD-like"/>
    <property type="match status" value="1"/>
</dbReference>
<dbReference type="Gene3D" id="3.30.70.1230">
    <property type="entry name" value="Nucleotide cyclase"/>
    <property type="match status" value="2"/>
</dbReference>
<dbReference type="InterPro" id="IPR001054">
    <property type="entry name" value="A/G_cyclase"/>
</dbReference>
<dbReference type="InterPro" id="IPR018303">
    <property type="entry name" value="ATPase_P-typ_P_site"/>
</dbReference>
<dbReference type="InterPro" id="IPR023298">
    <property type="entry name" value="ATPase_P-typ_TM_dom_sf"/>
</dbReference>
<dbReference type="InterPro" id="IPR008250">
    <property type="entry name" value="ATPase_P-typ_transduc_dom_A_sf"/>
</dbReference>
<dbReference type="InterPro" id="IPR036412">
    <property type="entry name" value="HAD-like_sf"/>
</dbReference>
<dbReference type="InterPro" id="IPR023214">
    <property type="entry name" value="HAD_sf"/>
</dbReference>
<dbReference type="InterPro" id="IPR029787">
    <property type="entry name" value="Nucleotide_cyclase"/>
</dbReference>
<dbReference type="InterPro" id="IPR032630">
    <property type="entry name" value="P_typ_ATPase_c"/>
</dbReference>
<dbReference type="PANTHER" id="PTHR24092:SF175">
    <property type="entry name" value="PHOSPHOLIPID-TRANSPORTING ATPASE"/>
    <property type="match status" value="1"/>
</dbReference>
<dbReference type="PANTHER" id="PTHR24092">
    <property type="entry name" value="PROBABLE PHOSPHOLIPID-TRANSPORTING ATPASE"/>
    <property type="match status" value="1"/>
</dbReference>
<dbReference type="Pfam" id="PF00122">
    <property type="entry name" value="E1-E2_ATPase"/>
    <property type="match status" value="1"/>
</dbReference>
<dbReference type="Pfam" id="PF00211">
    <property type="entry name" value="Guanylate_cyc"/>
    <property type="match status" value="3"/>
</dbReference>
<dbReference type="Pfam" id="PF16212">
    <property type="entry name" value="PhoLip_ATPase_C"/>
    <property type="match status" value="1"/>
</dbReference>
<dbReference type="SMART" id="SM00044">
    <property type="entry name" value="CYCc"/>
    <property type="match status" value="2"/>
</dbReference>
<dbReference type="SUPFAM" id="SSF81653">
    <property type="entry name" value="Calcium ATPase, transduction domain A"/>
    <property type="match status" value="1"/>
</dbReference>
<dbReference type="SUPFAM" id="SSF81665">
    <property type="entry name" value="Calcium ATPase, transmembrane domain M"/>
    <property type="match status" value="1"/>
</dbReference>
<dbReference type="SUPFAM" id="SSF56784">
    <property type="entry name" value="HAD-like"/>
    <property type="match status" value="1"/>
</dbReference>
<dbReference type="SUPFAM" id="SSF55073">
    <property type="entry name" value="Nucleotide cyclase"/>
    <property type="match status" value="2"/>
</dbReference>
<dbReference type="PROSITE" id="PS00154">
    <property type="entry name" value="ATPASE_E1_E2"/>
    <property type="match status" value="1"/>
</dbReference>
<dbReference type="PROSITE" id="PS50125">
    <property type="entry name" value="GUANYLATE_CYCLASE_2"/>
    <property type="match status" value="2"/>
</dbReference>
<name>GCYA_PLAF7</name>
<protein>
    <recommendedName>
        <fullName evidence="10">Guanylate cyclase alpha</fullName>
        <shortName evidence="9">PfGCalpha</shortName>
        <ecNumber evidence="11">4.6.1.2</ecNumber>
    </recommendedName>
    <alternativeName>
        <fullName evidence="9">Guanylyl cyclase</fullName>
    </alternativeName>
</protein>
<accession>Q8IHY1</accession>
<accession>Q9N9H5</accession>
<gene>
    <name evidence="9" type="primary">GCalpha</name>
    <name evidence="13" type="ORF">PF3D7_1138400</name>
</gene>
<feature type="chain" id="PRO_0000452805" description="Guanylate cyclase alpha">
    <location>
        <begin position="1"/>
        <end position="4226"/>
    </location>
</feature>
<feature type="topological domain" description="Cytoplasmic" evidence="10">
    <location>
        <begin position="1"/>
        <end position="104"/>
    </location>
</feature>
<feature type="transmembrane region" description="Helical" evidence="3">
    <location>
        <begin position="105"/>
        <end position="125"/>
    </location>
</feature>
<feature type="topological domain" description="Extracellular" evidence="10">
    <location>
        <begin position="126"/>
        <end position="131"/>
    </location>
</feature>
<feature type="transmembrane region" description="Helical" evidence="3">
    <location>
        <begin position="132"/>
        <end position="152"/>
    </location>
</feature>
<feature type="topological domain" description="Cytoplasmic" evidence="10">
    <location>
        <begin position="153"/>
        <end position="337"/>
    </location>
</feature>
<feature type="transmembrane region" description="Helical" evidence="3">
    <location>
        <begin position="338"/>
        <end position="358"/>
    </location>
</feature>
<feature type="topological domain" description="Extracellular" evidence="10">
    <location>
        <begin position="359"/>
        <end position="392"/>
    </location>
</feature>
<feature type="transmembrane region" description="Helical" evidence="3">
    <location>
        <begin position="393"/>
        <end position="413"/>
    </location>
</feature>
<feature type="topological domain" description="Cytoplasmic" evidence="10">
    <location>
        <begin position="414"/>
        <end position="2083"/>
    </location>
</feature>
<feature type="transmembrane region" description="Helical" evidence="3">
    <location>
        <begin position="2084"/>
        <end position="2104"/>
    </location>
</feature>
<feature type="topological domain" description="Extracellular" evidence="10">
    <location>
        <begin position="2105"/>
        <end position="2119"/>
    </location>
</feature>
<feature type="transmembrane region" description="Helical" evidence="3">
    <location>
        <begin position="2120"/>
        <end position="2140"/>
    </location>
</feature>
<feature type="topological domain" description="Cytoplasmic" evidence="10">
    <location>
        <begin position="2141"/>
        <end position="2169"/>
    </location>
</feature>
<feature type="transmembrane region" description="Helical" evidence="3">
    <location>
        <begin position="2170"/>
        <end position="2190"/>
    </location>
</feature>
<feature type="topological domain" description="Extracellular" evidence="10">
    <location>
        <begin position="2191"/>
        <end position="2202"/>
    </location>
</feature>
<feature type="transmembrane region" description="Helical" evidence="3">
    <location>
        <begin position="2203"/>
        <end position="2223"/>
    </location>
</feature>
<feature type="topological domain" description="Cytoplasmic" evidence="10">
    <location>
        <begin position="2224"/>
        <end position="2235"/>
    </location>
</feature>
<feature type="transmembrane region" description="Helical" evidence="3">
    <location>
        <begin position="2236"/>
        <end position="2256"/>
    </location>
</feature>
<feature type="topological domain" description="Extracellular" evidence="10">
    <location>
        <begin position="2257"/>
        <end position="2275"/>
    </location>
</feature>
<feature type="transmembrane region" description="Helical" evidence="3">
    <location>
        <begin position="2276"/>
        <end position="2296"/>
    </location>
</feature>
<feature type="topological domain" description="Cytoplasmic" evidence="10">
    <location>
        <begin position="2297"/>
        <end position="2787"/>
    </location>
</feature>
<feature type="transmembrane region" description="Helical" evidence="3">
    <location>
        <begin position="2788"/>
        <end position="2808"/>
    </location>
</feature>
<feature type="topological domain" description="Extracellular" evidence="10">
    <location>
        <begin position="2809"/>
        <end position="2828"/>
    </location>
</feature>
<feature type="transmembrane region" description="Helical" evidence="3">
    <location>
        <begin position="2829"/>
        <end position="2849"/>
    </location>
</feature>
<feature type="topological domain" description="Cytoplasmic" evidence="10">
    <location>
        <begin position="2850"/>
        <end position="2860"/>
    </location>
</feature>
<feature type="transmembrane region" description="Helical" evidence="3">
    <location>
        <begin position="2861"/>
        <end position="2881"/>
    </location>
</feature>
<feature type="topological domain" description="Extracellular" evidence="10">
    <location>
        <begin position="2882"/>
        <end position="2900"/>
    </location>
</feature>
<feature type="transmembrane region" description="Helical" evidence="3">
    <location>
        <begin position="2901"/>
        <end position="2921"/>
    </location>
</feature>
<feature type="topological domain" description="Cytoplasmic" evidence="10">
    <location>
        <begin position="2922"/>
        <end position="2930"/>
    </location>
</feature>
<feature type="transmembrane region" description="Helical" evidence="3">
    <location>
        <begin position="2931"/>
        <end position="2951"/>
    </location>
</feature>
<feature type="topological domain" description="Extracellular" evidence="10">
    <location>
        <begin position="2952"/>
        <end position="3008"/>
    </location>
</feature>
<feature type="transmembrane region" description="Helical" evidence="3">
    <location>
        <begin position="3009"/>
        <end position="3029"/>
    </location>
</feature>
<feature type="topological domain" description="Cytoplasmic" evidence="10">
    <location>
        <begin position="3030"/>
        <end position="3738"/>
    </location>
</feature>
<feature type="transmembrane region" description="Helical" evidence="3">
    <location>
        <begin position="3739"/>
        <end position="3759"/>
    </location>
</feature>
<feature type="topological domain" description="Extracellular" evidence="10">
    <location>
        <begin position="3760"/>
        <end position="3773"/>
    </location>
</feature>
<feature type="transmembrane region" description="Helical" evidence="3">
    <location>
        <begin position="3774"/>
        <end position="3794"/>
    </location>
</feature>
<feature type="topological domain" description="Cytoplasmic" evidence="10">
    <location>
        <begin position="3795"/>
        <end position="3811"/>
    </location>
</feature>
<feature type="transmembrane region" description="Helical" evidence="3">
    <location>
        <begin position="3812"/>
        <end position="3832"/>
    </location>
</feature>
<feature type="topological domain" description="Extracellular" evidence="10">
    <location>
        <begin position="3833"/>
        <end position="3840"/>
    </location>
</feature>
<feature type="transmembrane region" description="Helical" evidence="3">
    <location>
        <begin position="3841"/>
        <end position="3861"/>
    </location>
</feature>
<feature type="topological domain" description="Cytoplasmic" evidence="10">
    <location>
        <begin position="3862"/>
        <end position="3871"/>
    </location>
</feature>
<feature type="transmembrane region" description="Helical" evidence="3">
    <location>
        <begin position="3872"/>
        <end position="3892"/>
    </location>
</feature>
<feature type="topological domain" description="Extracellular" evidence="10">
    <location>
        <position position="3893"/>
    </location>
</feature>
<feature type="transmembrane region" description="Helical" evidence="3">
    <location>
        <begin position="3894"/>
        <end position="3914"/>
    </location>
</feature>
<feature type="topological domain" description="Cytoplasmic" evidence="10">
    <location>
        <begin position="3915"/>
        <end position="4226"/>
    </location>
</feature>
<feature type="domain" description="Guanylate cyclase 1" evidence="4">
    <location>
        <begin position="3013"/>
        <end position="3270"/>
    </location>
</feature>
<feature type="domain" description="Guanylate cyclase 2" evidence="4">
    <location>
        <begin position="3970"/>
        <end position="4104"/>
    </location>
</feature>
<feature type="region of interest" description="Disordered" evidence="6">
    <location>
        <begin position="552"/>
        <end position="572"/>
    </location>
</feature>
<feature type="region of interest" description="Disordered" evidence="6">
    <location>
        <begin position="832"/>
        <end position="904"/>
    </location>
</feature>
<feature type="region of interest" description="Disordered" evidence="6">
    <location>
        <begin position="968"/>
        <end position="989"/>
    </location>
</feature>
<feature type="region of interest" description="Disordered" evidence="6">
    <location>
        <begin position="1740"/>
        <end position="1765"/>
    </location>
</feature>
<feature type="region of interest" description="Disordered" evidence="6">
    <location>
        <begin position="2477"/>
        <end position="2505"/>
    </location>
</feature>
<feature type="region of interest" description="Disordered" evidence="6">
    <location>
        <begin position="3077"/>
        <end position="3150"/>
    </location>
</feature>
<feature type="region of interest" description="Disordered" evidence="6">
    <location>
        <begin position="3201"/>
        <end position="3230"/>
    </location>
</feature>
<feature type="compositionally biased region" description="Low complexity" evidence="6">
    <location>
        <begin position="558"/>
        <end position="570"/>
    </location>
</feature>
<feature type="compositionally biased region" description="Acidic residues" evidence="6">
    <location>
        <begin position="838"/>
        <end position="847"/>
    </location>
</feature>
<feature type="compositionally biased region" description="Basic and acidic residues" evidence="6">
    <location>
        <begin position="854"/>
        <end position="873"/>
    </location>
</feature>
<feature type="compositionally biased region" description="Low complexity" evidence="6">
    <location>
        <begin position="874"/>
        <end position="904"/>
    </location>
</feature>
<feature type="compositionally biased region" description="Basic and acidic residues" evidence="6">
    <location>
        <begin position="1745"/>
        <end position="1754"/>
    </location>
</feature>
<feature type="compositionally biased region" description="Low complexity" evidence="6">
    <location>
        <begin position="1755"/>
        <end position="1765"/>
    </location>
</feature>
<feature type="compositionally biased region" description="Low complexity" evidence="6">
    <location>
        <begin position="2488"/>
        <end position="2502"/>
    </location>
</feature>
<feature type="compositionally biased region" description="Low complexity" evidence="6">
    <location>
        <begin position="3083"/>
        <end position="3098"/>
    </location>
</feature>
<feature type="compositionally biased region" description="Low complexity" evidence="6">
    <location>
        <begin position="3108"/>
        <end position="3138"/>
    </location>
</feature>
<feature type="compositionally biased region" description="Acidic residues" evidence="6">
    <location>
        <begin position="3140"/>
        <end position="3150"/>
    </location>
</feature>
<feature type="compositionally biased region" description="Basic and acidic residues" evidence="6">
    <location>
        <begin position="3201"/>
        <end position="3220"/>
    </location>
</feature>
<feature type="binding site" evidence="4">
    <location>
        <position position="3975"/>
    </location>
    <ligand>
        <name>Mg(2+)</name>
        <dbReference type="ChEBI" id="CHEBI:18420"/>
        <label>1</label>
    </ligand>
</feature>
<feature type="binding site" evidence="4">
    <location>
        <position position="3975"/>
    </location>
    <ligand>
        <name>Mg(2+)</name>
        <dbReference type="ChEBI" id="CHEBI:18420"/>
        <label>2</label>
    </ligand>
</feature>
<feature type="binding site" evidence="4">
    <location>
        <position position="3976"/>
    </location>
    <ligand>
        <name>Mg(2+)</name>
        <dbReference type="ChEBI" id="CHEBI:18420"/>
        <label>2</label>
    </ligand>
</feature>
<feature type="binding site" evidence="4">
    <location>
        <position position="4019"/>
    </location>
    <ligand>
        <name>Mg(2+)</name>
        <dbReference type="ChEBI" id="CHEBI:18420"/>
        <label>1</label>
    </ligand>
</feature>
<feature type="binding site" evidence="4">
    <location>
        <position position="4019"/>
    </location>
    <ligand>
        <name>Mg(2+)</name>
        <dbReference type="ChEBI" id="CHEBI:18420"/>
        <label>2</label>
    </ligand>
</feature>
<feature type="glycosylation site" description="N-linked (GlcNAc...) asparagine" evidence="5">
    <location>
        <position position="127"/>
    </location>
</feature>
<feature type="glycosylation site" description="N-linked (GlcNAc...) asparagine" evidence="5">
    <location>
        <position position="366"/>
    </location>
</feature>
<feature type="mutagenesis site" description="Lethal in the asexual blood stage." evidence="8">
    <original>D</original>
    <variation>N</variation>
    <location>
        <position position="756"/>
    </location>
</feature>
<feature type="sequence conflict" description="In Ref. 1; CAC00546." evidence="10" ref="1">
    <original>P</original>
    <variation>H</variation>
    <location>
        <position position="206"/>
    </location>
</feature>
<feature type="sequence conflict" description="In Ref. 1; CAC00546." evidence="10" ref="1">
    <original>N</original>
    <variation>T</variation>
    <location>
        <position position="289"/>
    </location>
</feature>
<feature type="sequence conflict" description="In Ref. 1; CAC00546." evidence="10" ref="1">
    <original>I</original>
    <variation>S</variation>
    <location>
        <position position="298"/>
    </location>
</feature>
<feature type="sequence conflict" description="In Ref. 1; CAC00546." evidence="10" ref="1">
    <original>T</original>
    <variation>S</variation>
    <location>
        <position position="535"/>
    </location>
</feature>
<feature type="sequence conflict" description="In Ref. 1; CAC00546." evidence="10" ref="1">
    <original>N</original>
    <variation>T</variation>
    <location>
        <position position="562"/>
    </location>
</feature>
<feature type="sequence conflict" description="In Ref. 1; CAC00546." evidence="10" ref="1">
    <original>F</original>
    <variation>N</variation>
    <location>
        <position position="823"/>
    </location>
</feature>
<feature type="sequence conflict" description="In Ref. 1; CAC00546." evidence="10" ref="1">
    <original>I</original>
    <variation>L</variation>
    <location>
        <position position="2265"/>
    </location>
</feature>
<feature type="sequence conflict" description="In Ref. 1; CAC00546." evidence="10" ref="1">
    <original>I</original>
    <variation>T</variation>
    <location>
        <position position="3014"/>
    </location>
</feature>
<feature type="sequence conflict" description="In Ref. 1; CAC00546." evidence="10" ref="1">
    <original>E</original>
    <variation>K</variation>
    <location>
        <position position="3581"/>
    </location>
</feature>
<feature type="sequence conflict" description="In Ref. 1; CAC00546." evidence="10" ref="1">
    <original>S</original>
    <variation>P</variation>
    <location>
        <position position="3591"/>
    </location>
</feature>
<feature type="sequence conflict" description="In Ref. 1; CAC00546." evidence="10" ref="1">
    <original>S</original>
    <variation>Y</variation>
    <location>
        <position position="3756"/>
    </location>
</feature>
<reference evidence="12" key="1">
    <citation type="journal article" date="2000" name="J. Biol. Chem.">
        <title>Guanylyl cyclase activity associated with putative bifunctional integral membrane proteins in Plasmodium falciparum.</title>
        <authorList>
            <person name="Carucci D.J."/>
            <person name="Witney A.A."/>
            <person name="Muhia D.K."/>
            <person name="Warhurst D.C."/>
            <person name="Schaap P."/>
            <person name="Meima M."/>
            <person name="Li J.L."/>
            <person name="Taylor M.C."/>
            <person name="Kelly J.M."/>
            <person name="Baker D.A."/>
        </authorList>
    </citation>
    <scope>NUCLEOTIDE SEQUENCE [GENOMIC DNA]</scope>
    <scope>SUBCELLULAR LOCATION</scope>
    <scope>DEVELOPMENTAL STAGE</scope>
</reference>
<reference evidence="14" key="2">
    <citation type="journal article" date="2002" name="Nature">
        <title>Genome sequence of the human malaria parasite Plasmodium falciparum.</title>
        <authorList>
            <person name="Gardner M.J."/>
            <person name="Hall N."/>
            <person name="Fung E."/>
            <person name="White O."/>
            <person name="Berriman M."/>
            <person name="Hyman R.W."/>
            <person name="Carlton J.M."/>
            <person name="Pain A."/>
            <person name="Nelson K.E."/>
            <person name="Bowman S."/>
            <person name="Paulsen I.T."/>
            <person name="James K.D."/>
            <person name="Eisen J.A."/>
            <person name="Rutherford K.M."/>
            <person name="Salzberg S.L."/>
            <person name="Craig A."/>
            <person name="Kyes S."/>
            <person name="Chan M.-S."/>
            <person name="Nene V."/>
            <person name="Shallom S.J."/>
            <person name="Suh B."/>
            <person name="Peterson J."/>
            <person name="Angiuoli S."/>
            <person name="Pertea M."/>
            <person name="Allen J."/>
            <person name="Selengut J."/>
            <person name="Haft D."/>
            <person name="Mather M.W."/>
            <person name="Vaidya A.B."/>
            <person name="Martin D.M.A."/>
            <person name="Fairlamb A.H."/>
            <person name="Fraunholz M.J."/>
            <person name="Roos D.S."/>
            <person name="Ralph S.A."/>
            <person name="McFadden G.I."/>
            <person name="Cummings L.M."/>
            <person name="Subramanian G.M."/>
            <person name="Mungall C."/>
            <person name="Venter J.C."/>
            <person name="Carucci D.J."/>
            <person name="Hoffman S.L."/>
            <person name="Newbold C."/>
            <person name="Davis R.W."/>
            <person name="Fraser C.M."/>
            <person name="Barrell B.G."/>
        </authorList>
    </citation>
    <scope>NUCLEOTIDE SEQUENCE [LARGE SCALE GENOMIC DNA]</scope>
    <source>
        <strain evidence="14">3D7</strain>
    </source>
</reference>
<reference evidence="10" key="3">
    <citation type="journal article" date="2021" name="MBio">
        <title>Plasmodium falciparum Guanylyl Cyclase-Alpha and the Activity of Its Appended P4-ATPase Domain Are Essential for cGMP Synthesis and Blood-Stage Egress.</title>
        <authorList>
            <person name="Nofal S.D."/>
            <person name="Patel A."/>
            <person name="Blackman M.J."/>
            <person name="Flueck C."/>
            <person name="Baker D.A."/>
        </authorList>
    </citation>
    <scope>FUNCTION</scope>
    <scope>CATALYTIC ACTIVITY</scope>
    <scope>SUBCELLULAR LOCATION</scope>
    <scope>DEVELOPMENTAL STAGE</scope>
    <scope>DOMAIN</scope>
    <scope>DISRUPTION PHENOTYPE</scope>
    <scope>MUTAGENESIS OF ASP-756</scope>
</reference>
<organism evidence="14">
    <name type="scientific">Plasmodium falciparum (isolate 3D7)</name>
    <dbReference type="NCBI Taxonomy" id="36329"/>
    <lineage>
        <taxon>Eukaryota</taxon>
        <taxon>Sar</taxon>
        <taxon>Alveolata</taxon>
        <taxon>Apicomplexa</taxon>
        <taxon>Aconoidasida</taxon>
        <taxon>Haemosporida</taxon>
        <taxon>Plasmodiidae</taxon>
        <taxon>Plasmodium</taxon>
        <taxon>Plasmodium (Laverania)</taxon>
    </lineage>
</organism>
<keyword id="KW-1003">Cell membrane</keyword>
<keyword id="KW-0141">cGMP biosynthesis</keyword>
<keyword id="KW-0968">Cytoplasmic vesicle</keyword>
<keyword id="KW-0325">Glycoprotein</keyword>
<keyword id="KW-0456">Lyase</keyword>
<keyword id="KW-0460">Magnesium</keyword>
<keyword id="KW-0472">Membrane</keyword>
<keyword id="KW-0479">Metal-binding</keyword>
<keyword id="KW-1185">Reference proteome</keyword>
<keyword id="KW-0812">Transmembrane</keyword>
<keyword id="KW-1133">Transmembrane helix</keyword>
<evidence type="ECO:0000250" key="1">
    <source>
        <dbReference type="UniProtKB" id="P30803"/>
    </source>
</evidence>
<evidence type="ECO:0000250" key="2">
    <source>
        <dbReference type="UniProtKB" id="Q8IDA0"/>
    </source>
</evidence>
<evidence type="ECO:0000255" key="3"/>
<evidence type="ECO:0000255" key="4">
    <source>
        <dbReference type="PROSITE-ProRule" id="PRU00099"/>
    </source>
</evidence>
<evidence type="ECO:0000255" key="5">
    <source>
        <dbReference type="PROSITE-ProRule" id="PRU00498"/>
    </source>
</evidence>
<evidence type="ECO:0000256" key="6">
    <source>
        <dbReference type="SAM" id="MobiDB-lite"/>
    </source>
</evidence>
<evidence type="ECO:0000269" key="7">
    <source>
    </source>
</evidence>
<evidence type="ECO:0000269" key="8">
    <source>
    </source>
</evidence>
<evidence type="ECO:0000303" key="9">
    <source>
    </source>
</evidence>
<evidence type="ECO:0000305" key="10"/>
<evidence type="ECO:0000305" key="11">
    <source>
    </source>
</evidence>
<evidence type="ECO:0000312" key="12">
    <source>
        <dbReference type="EMBL" id="CAC00546.1"/>
    </source>
</evidence>
<evidence type="ECO:0000312" key="13">
    <source>
        <dbReference type="EMBL" id="CZT99049.1"/>
    </source>
</evidence>
<evidence type="ECO:0000312" key="14">
    <source>
        <dbReference type="Proteomes" id="UP000001450"/>
    </source>
</evidence>
<comment type="function">
    <text evidence="8 11">Catalyzes the synthesis of the second messenger cGMP from GTP (Probable). In asexual blood stage schizonts, required for cGMP production which is essential for PKG activation, PKG-dependent Ca(2+) release, and ultimately merozoite egress from host erythrocytes (PubMed:33500341).</text>
</comment>
<comment type="catalytic activity">
    <reaction evidence="11">
        <text>GTP = 3',5'-cyclic GMP + diphosphate</text>
        <dbReference type="Rhea" id="RHEA:13665"/>
        <dbReference type="ChEBI" id="CHEBI:33019"/>
        <dbReference type="ChEBI" id="CHEBI:37565"/>
        <dbReference type="ChEBI" id="CHEBI:57746"/>
        <dbReference type="EC" id="4.6.1.2"/>
    </reaction>
</comment>
<comment type="cofactor">
    <cofactor evidence="2">
        <name>Mg(2+)</name>
        <dbReference type="ChEBI" id="CHEBI:18420"/>
    </cofactor>
    <cofactor evidence="2">
        <name>Mn(2+)</name>
        <dbReference type="ChEBI" id="CHEBI:29035"/>
    </cofactor>
    <text evidence="1 2">Binds 2 magnesium ions per subunit (By similarity). Is also active with manganese (in vitro) (By similarity).</text>
</comment>
<comment type="subcellular location">
    <subcellularLocation>
        <location evidence="7">Cell membrane</location>
        <topology evidence="3">Multi-pass membrane protein</topology>
    </subcellularLocation>
    <subcellularLocation>
        <location evidence="8">Cytoplasmic vesicle membrane</location>
        <topology evidence="3">Multi-pass membrane protein</topology>
    </subcellularLocation>
    <text evidence="7">In gametocytes, localizes to the cell membrane and/or the parasitophorous vacuole membrane.</text>
</comment>
<comment type="developmental stage">
    <text evidence="7 8">During the parasite blood stage, highly expressed in mature schizonts and in gametocytes.</text>
</comment>
<comment type="domain">
    <text evidence="11">The N-terminus contains a P-type ATPase-like domain which may be important for guanylate cyclase activity.</text>
</comment>
<comment type="disruption phenotype">
    <text evidence="8">Knockout at the asexual blood stage causes growth arrest (PubMed:33500341). Mature schizonts accumulate in host erythrocytes due to a defect in merozoite egress (PubMed:33500341). Lack of swelling or rupture of the parasitophorous vacuole membrane and, no Ca(2+) release from intracellular stores and no secretion of protease SERA5 (PubMed:33500341). Mature schizonts fail to synthesize cGMP; no defect in cAMP levels (PubMed:33500341).</text>
</comment>
<comment type="similarity">
    <text evidence="10">In the N-terminal section; belongs to the cation transport ATPase (P-type) (TC 3.A.3) family. Type IV subfamily.</text>
</comment>
<comment type="similarity">
    <text evidence="10">In the C-terminal section; belongs to the adenylyl cyclase class-4/guanylyl cyclase family.</text>
</comment>
<comment type="caution">
    <text evidence="7">Unlike the two guanylate cyclase domains of GCbeta, the guanylate cyclase domains 1 and 2 of GCalpha lack catalytic activity when expressed on their own or in combination.</text>
</comment>
<proteinExistence type="evidence at protein level"/>